<reference key="1">
    <citation type="journal article" date="2008" name="PLoS ONE">
        <title>Environmental adaptation: genomic analysis of the piezotolerant and psychrotolerant deep-sea iron reducing bacterium Shewanella piezotolerans WP3.</title>
        <authorList>
            <person name="Wang F."/>
            <person name="Wang J."/>
            <person name="Jian H."/>
            <person name="Zhang B."/>
            <person name="Li S."/>
            <person name="Wang F."/>
            <person name="Zeng X."/>
            <person name="Gao L."/>
            <person name="Bartlett D.H."/>
            <person name="Yu J."/>
            <person name="Hu S."/>
            <person name="Xiao X."/>
        </authorList>
    </citation>
    <scope>NUCLEOTIDE SEQUENCE [LARGE SCALE GENOMIC DNA]</scope>
    <source>
        <strain>WP3 / JCM 13877</strain>
    </source>
</reference>
<proteinExistence type="inferred from homology"/>
<accession>B8CVU6</accession>
<sequence>MANAKEIKTKIASVQNTQKITSAMEMVAASKMRKAQDRMASSRPYAENMRKVIGHVAQGSLEYKHPYLEVREAKRVGYIVVSTDRGLCGGLNVNLFKKVVADVKKQREAGAEVEFCPIGARSVQFFNSFGGQVSAHASGLGDAPSLTDLIGTVRVMLEAYNEGKLDRLYVVFNKFVNTMTQTPVIEQLLPLPKSEEDEISHHWDYLYEPDPKELLDTLLVRYVESQVYQGVVENIASEQAARMVAMKAATDNAGELISDLELVYNKARQAAITQELSEIVSGAAAV</sequence>
<name>ATPG_SHEPW</name>
<feature type="chain" id="PRO_1000134206" description="ATP synthase gamma chain">
    <location>
        <begin position="1"/>
        <end position="286"/>
    </location>
</feature>
<keyword id="KW-0066">ATP synthesis</keyword>
<keyword id="KW-0997">Cell inner membrane</keyword>
<keyword id="KW-1003">Cell membrane</keyword>
<keyword id="KW-0139">CF(1)</keyword>
<keyword id="KW-0375">Hydrogen ion transport</keyword>
<keyword id="KW-0406">Ion transport</keyword>
<keyword id="KW-0472">Membrane</keyword>
<keyword id="KW-0813">Transport</keyword>
<gene>
    <name evidence="1" type="primary">atpG</name>
    <name type="ordered locus">swp_5157</name>
</gene>
<dbReference type="EMBL" id="CP000472">
    <property type="protein sequence ID" value="ACJ31772.1"/>
    <property type="molecule type" value="Genomic_DNA"/>
</dbReference>
<dbReference type="RefSeq" id="WP_020915096.1">
    <property type="nucleotide sequence ID" value="NC_011566.1"/>
</dbReference>
<dbReference type="SMR" id="B8CVU6"/>
<dbReference type="STRING" id="225849.swp_5157"/>
<dbReference type="KEGG" id="swp:swp_5157"/>
<dbReference type="eggNOG" id="COG0224">
    <property type="taxonomic scope" value="Bacteria"/>
</dbReference>
<dbReference type="HOGENOM" id="CLU_050669_0_1_6"/>
<dbReference type="OrthoDB" id="9812769at2"/>
<dbReference type="Proteomes" id="UP000000753">
    <property type="component" value="Chromosome"/>
</dbReference>
<dbReference type="GO" id="GO:0005886">
    <property type="term" value="C:plasma membrane"/>
    <property type="evidence" value="ECO:0007669"/>
    <property type="project" value="UniProtKB-SubCell"/>
</dbReference>
<dbReference type="GO" id="GO:0045259">
    <property type="term" value="C:proton-transporting ATP synthase complex"/>
    <property type="evidence" value="ECO:0007669"/>
    <property type="project" value="UniProtKB-KW"/>
</dbReference>
<dbReference type="GO" id="GO:0005524">
    <property type="term" value="F:ATP binding"/>
    <property type="evidence" value="ECO:0007669"/>
    <property type="project" value="UniProtKB-UniRule"/>
</dbReference>
<dbReference type="GO" id="GO:0046933">
    <property type="term" value="F:proton-transporting ATP synthase activity, rotational mechanism"/>
    <property type="evidence" value="ECO:0007669"/>
    <property type="project" value="UniProtKB-UniRule"/>
</dbReference>
<dbReference type="GO" id="GO:0042777">
    <property type="term" value="P:proton motive force-driven plasma membrane ATP synthesis"/>
    <property type="evidence" value="ECO:0007669"/>
    <property type="project" value="UniProtKB-UniRule"/>
</dbReference>
<dbReference type="CDD" id="cd12151">
    <property type="entry name" value="F1-ATPase_gamma"/>
    <property type="match status" value="1"/>
</dbReference>
<dbReference type="FunFam" id="1.10.287.80:FF:000005">
    <property type="entry name" value="ATP synthase gamma chain"/>
    <property type="match status" value="2"/>
</dbReference>
<dbReference type="FunFam" id="3.40.1380.10:FF:000001">
    <property type="entry name" value="ATP synthase gamma chain"/>
    <property type="match status" value="1"/>
</dbReference>
<dbReference type="Gene3D" id="3.40.1380.10">
    <property type="match status" value="1"/>
</dbReference>
<dbReference type="Gene3D" id="1.10.287.80">
    <property type="entry name" value="ATP synthase, gamma subunit, helix hairpin domain"/>
    <property type="match status" value="1"/>
</dbReference>
<dbReference type="HAMAP" id="MF_00815">
    <property type="entry name" value="ATP_synth_gamma_bact"/>
    <property type="match status" value="1"/>
</dbReference>
<dbReference type="InterPro" id="IPR035968">
    <property type="entry name" value="ATP_synth_F1_ATPase_gsu"/>
</dbReference>
<dbReference type="InterPro" id="IPR000131">
    <property type="entry name" value="ATP_synth_F1_gsu"/>
</dbReference>
<dbReference type="InterPro" id="IPR023632">
    <property type="entry name" value="ATP_synth_F1_gsu_CS"/>
</dbReference>
<dbReference type="NCBIfam" id="TIGR01146">
    <property type="entry name" value="ATPsyn_F1gamma"/>
    <property type="match status" value="1"/>
</dbReference>
<dbReference type="NCBIfam" id="NF004144">
    <property type="entry name" value="PRK05621.1-1"/>
    <property type="match status" value="1"/>
</dbReference>
<dbReference type="PANTHER" id="PTHR11693">
    <property type="entry name" value="ATP SYNTHASE GAMMA CHAIN"/>
    <property type="match status" value="1"/>
</dbReference>
<dbReference type="PANTHER" id="PTHR11693:SF22">
    <property type="entry name" value="ATP SYNTHASE SUBUNIT GAMMA, MITOCHONDRIAL"/>
    <property type="match status" value="1"/>
</dbReference>
<dbReference type="Pfam" id="PF00231">
    <property type="entry name" value="ATP-synt"/>
    <property type="match status" value="1"/>
</dbReference>
<dbReference type="PRINTS" id="PR00126">
    <property type="entry name" value="ATPASEGAMMA"/>
</dbReference>
<dbReference type="SUPFAM" id="SSF52943">
    <property type="entry name" value="ATP synthase (F1-ATPase), gamma subunit"/>
    <property type="match status" value="1"/>
</dbReference>
<dbReference type="PROSITE" id="PS00153">
    <property type="entry name" value="ATPASE_GAMMA"/>
    <property type="match status" value="1"/>
</dbReference>
<organism>
    <name type="scientific">Shewanella piezotolerans (strain WP3 / JCM 13877)</name>
    <dbReference type="NCBI Taxonomy" id="225849"/>
    <lineage>
        <taxon>Bacteria</taxon>
        <taxon>Pseudomonadati</taxon>
        <taxon>Pseudomonadota</taxon>
        <taxon>Gammaproteobacteria</taxon>
        <taxon>Alteromonadales</taxon>
        <taxon>Shewanellaceae</taxon>
        <taxon>Shewanella</taxon>
    </lineage>
</organism>
<protein>
    <recommendedName>
        <fullName evidence="1">ATP synthase gamma chain</fullName>
    </recommendedName>
    <alternativeName>
        <fullName evidence="1">ATP synthase F1 sector gamma subunit</fullName>
    </alternativeName>
    <alternativeName>
        <fullName evidence="1">F-ATPase gamma subunit</fullName>
    </alternativeName>
</protein>
<evidence type="ECO:0000255" key="1">
    <source>
        <dbReference type="HAMAP-Rule" id="MF_00815"/>
    </source>
</evidence>
<comment type="function">
    <text evidence="1">Produces ATP from ADP in the presence of a proton gradient across the membrane. The gamma chain is believed to be important in regulating ATPase activity and the flow of protons through the CF(0) complex.</text>
</comment>
<comment type="subunit">
    <text evidence="1">F-type ATPases have 2 components, CF(1) - the catalytic core - and CF(0) - the membrane proton channel. CF(1) has five subunits: alpha(3), beta(3), gamma(1), delta(1), epsilon(1). CF(0) has three main subunits: a, b and c.</text>
</comment>
<comment type="subcellular location">
    <subcellularLocation>
        <location evidence="1">Cell inner membrane</location>
        <topology evidence="1">Peripheral membrane protein</topology>
    </subcellularLocation>
</comment>
<comment type="similarity">
    <text evidence="1">Belongs to the ATPase gamma chain family.</text>
</comment>